<feature type="chain" id="PRO_0000219106" description="Sodium/potassium-transporting ATPase subunit beta-2">
    <location>
        <begin position="1"/>
        <end position="290"/>
    </location>
</feature>
<feature type="topological domain" description="Cytoplasmic" evidence="3">
    <location>
        <begin position="1"/>
        <end position="39"/>
    </location>
</feature>
<feature type="transmembrane region" description="Helical; Signal-anchor for type II membrane protein" evidence="3">
    <location>
        <begin position="40"/>
        <end position="67"/>
    </location>
</feature>
<feature type="topological domain" description="Extracellular" evidence="3">
    <location>
        <begin position="68"/>
        <end position="290"/>
    </location>
</feature>
<feature type="region of interest" description="immunoglobulin-like" evidence="1">
    <location>
        <begin position="193"/>
        <end position="290"/>
    </location>
</feature>
<feature type="glycosylation site" description="N-linked (GlcNAc...) asparagine" evidence="6">
    <location>
        <position position="96"/>
    </location>
</feature>
<feature type="glycosylation site" description="N-linked (GlcNAc...) asparagine" evidence="6">
    <location>
        <position position="118"/>
    </location>
</feature>
<feature type="glycosylation site" description="N-linked (GlcNAc...) asparagine" evidence="6">
    <location>
        <position position="153"/>
    </location>
</feature>
<feature type="glycosylation site" description="N-linked (GlcNAc...) asparagine" evidence="6">
    <location>
        <position position="159"/>
    </location>
</feature>
<feature type="glycosylation site" description="N-linked (GlcNAc...) asparagine" evidence="3">
    <location>
        <position position="193"/>
    </location>
</feature>
<feature type="glycosylation site" description="N-linked (GlcNAc...) asparagine" evidence="3">
    <location>
        <position position="197"/>
    </location>
</feature>
<feature type="glycosylation site" description="N-linked (GlcNAc...) asparagine" evidence="6">
    <location>
        <position position="238"/>
    </location>
</feature>
<feature type="disulfide bond" evidence="1">
    <location>
        <begin position="129"/>
        <end position="150"/>
    </location>
</feature>
<feature type="disulfide bond" evidence="1">
    <location>
        <begin position="160"/>
        <end position="177"/>
    </location>
</feature>
<feature type="disulfide bond" evidence="1">
    <location>
        <begin position="200"/>
        <end position="261"/>
    </location>
</feature>
<accession>P13638</accession>
<organism>
    <name type="scientific">Rattus norvegicus</name>
    <name type="common">Rat</name>
    <dbReference type="NCBI Taxonomy" id="10116"/>
    <lineage>
        <taxon>Eukaryota</taxon>
        <taxon>Metazoa</taxon>
        <taxon>Chordata</taxon>
        <taxon>Craniata</taxon>
        <taxon>Vertebrata</taxon>
        <taxon>Euteleostomi</taxon>
        <taxon>Mammalia</taxon>
        <taxon>Eutheria</taxon>
        <taxon>Euarchontoglires</taxon>
        <taxon>Glires</taxon>
        <taxon>Rodentia</taxon>
        <taxon>Myomorpha</taxon>
        <taxon>Muroidea</taxon>
        <taxon>Muridae</taxon>
        <taxon>Murinae</taxon>
        <taxon>Rattus</taxon>
    </lineage>
</organism>
<dbReference type="EMBL" id="J04629">
    <property type="protein sequence ID" value="AAA40782.1"/>
    <property type="molecule type" value="mRNA"/>
</dbReference>
<dbReference type="EMBL" id="U45946">
    <property type="protein sequence ID" value="AAC52918.1"/>
    <property type="molecule type" value="mRNA"/>
</dbReference>
<dbReference type="EMBL" id="D90048">
    <property type="protein sequence ID" value="BAA14101.1"/>
    <property type="molecule type" value="Genomic_DNA"/>
</dbReference>
<dbReference type="PIR" id="A32459">
    <property type="entry name" value="A32459"/>
</dbReference>
<dbReference type="SMR" id="P13638"/>
<dbReference type="FunCoup" id="P13638">
    <property type="interactions" value="1194"/>
</dbReference>
<dbReference type="IntAct" id="P13638">
    <property type="interactions" value="1"/>
</dbReference>
<dbReference type="MINT" id="P13638"/>
<dbReference type="STRING" id="10116.ENSRNOP00000015076"/>
<dbReference type="GlyCosmos" id="P13638">
    <property type="glycosylation" value="7 sites, 29 glycans"/>
</dbReference>
<dbReference type="GlyGen" id="P13638">
    <property type="glycosylation" value="7 sites, 27 N-linked glycans (4 sites), 1 N-linked;o-linked glycan (1 site)"/>
</dbReference>
<dbReference type="iPTMnet" id="P13638"/>
<dbReference type="PhosphoSitePlus" id="P13638"/>
<dbReference type="SwissPalm" id="P13638"/>
<dbReference type="PaxDb" id="10116-ENSRNOP00000015076"/>
<dbReference type="UCSC" id="RGD:2171">
    <property type="organism name" value="rat"/>
</dbReference>
<dbReference type="AGR" id="RGD:2171"/>
<dbReference type="RGD" id="2171">
    <property type="gene designation" value="Atp1b2"/>
</dbReference>
<dbReference type="eggNOG" id="KOG3927">
    <property type="taxonomic scope" value="Eukaryota"/>
</dbReference>
<dbReference type="InParanoid" id="P13638"/>
<dbReference type="PhylomeDB" id="P13638"/>
<dbReference type="Reactome" id="R-RNO-210991">
    <property type="pathway name" value="Basigin interactions"/>
</dbReference>
<dbReference type="Reactome" id="R-RNO-5578775">
    <property type="pathway name" value="Ion homeostasis"/>
</dbReference>
<dbReference type="Reactome" id="R-RNO-936837">
    <property type="pathway name" value="Ion transport by P-type ATPases"/>
</dbReference>
<dbReference type="SABIO-RK" id="P13638"/>
<dbReference type="PRO" id="PR:P13638"/>
<dbReference type="Proteomes" id="UP000002494">
    <property type="component" value="Unplaced"/>
</dbReference>
<dbReference type="GO" id="GO:0016324">
    <property type="term" value="C:apical plasma membrane"/>
    <property type="evidence" value="ECO:0000314"/>
    <property type="project" value="RGD"/>
</dbReference>
<dbReference type="GO" id="GO:0097450">
    <property type="term" value="C:astrocyte end-foot"/>
    <property type="evidence" value="ECO:0000266"/>
    <property type="project" value="RGD"/>
</dbReference>
<dbReference type="GO" id="GO:0097449">
    <property type="term" value="C:astrocyte projection"/>
    <property type="evidence" value="ECO:0000266"/>
    <property type="project" value="RGD"/>
</dbReference>
<dbReference type="GO" id="GO:0044298">
    <property type="term" value="C:cell body membrane"/>
    <property type="evidence" value="ECO:0000266"/>
    <property type="project" value="RGD"/>
</dbReference>
<dbReference type="GO" id="GO:0071944">
    <property type="term" value="C:cell periphery"/>
    <property type="evidence" value="ECO:0000314"/>
    <property type="project" value="ARUK-UCL"/>
</dbReference>
<dbReference type="GO" id="GO:0031253">
    <property type="term" value="C:cell projection membrane"/>
    <property type="evidence" value="ECO:0000266"/>
    <property type="project" value="RGD"/>
</dbReference>
<dbReference type="GO" id="GO:0005737">
    <property type="term" value="C:cytoplasm"/>
    <property type="evidence" value="ECO:0000266"/>
    <property type="project" value="RGD"/>
</dbReference>
<dbReference type="GO" id="GO:0009897">
    <property type="term" value="C:external side of plasma membrane"/>
    <property type="evidence" value="ECO:0000266"/>
    <property type="project" value="RGD"/>
</dbReference>
<dbReference type="GO" id="GO:0016328">
    <property type="term" value="C:lateral plasma membrane"/>
    <property type="evidence" value="ECO:0000266"/>
    <property type="project" value="RGD"/>
</dbReference>
<dbReference type="GO" id="GO:0016020">
    <property type="term" value="C:membrane"/>
    <property type="evidence" value="ECO:0000314"/>
    <property type="project" value="ARUK-UCL"/>
</dbReference>
<dbReference type="GO" id="GO:0098984">
    <property type="term" value="C:neuron to neuron synapse"/>
    <property type="evidence" value="ECO:0000266"/>
    <property type="project" value="RGD"/>
</dbReference>
<dbReference type="GO" id="GO:0001917">
    <property type="term" value="C:photoreceptor inner segment"/>
    <property type="evidence" value="ECO:0000266"/>
    <property type="project" value="RGD"/>
</dbReference>
<dbReference type="GO" id="GO:0005886">
    <property type="term" value="C:plasma membrane"/>
    <property type="evidence" value="ECO:0000266"/>
    <property type="project" value="RGD"/>
</dbReference>
<dbReference type="GO" id="GO:0005890">
    <property type="term" value="C:sodium:potassium-exchanging ATPase complex"/>
    <property type="evidence" value="ECO:0000314"/>
    <property type="project" value="ARUK-UCL"/>
</dbReference>
<dbReference type="GO" id="GO:0001671">
    <property type="term" value="F:ATPase activator activity"/>
    <property type="evidence" value="ECO:0000266"/>
    <property type="project" value="RGD"/>
</dbReference>
<dbReference type="GO" id="GO:0051117">
    <property type="term" value="F:ATPase binding"/>
    <property type="evidence" value="ECO:0000266"/>
    <property type="project" value="RGD"/>
</dbReference>
<dbReference type="GO" id="GO:0005391">
    <property type="term" value="F:P-type sodium:potassium-exchanging transporter activity"/>
    <property type="evidence" value="ECO:0000314"/>
    <property type="project" value="RGD"/>
</dbReference>
<dbReference type="GO" id="GO:0046982">
    <property type="term" value="F:protein heterodimerization activity"/>
    <property type="evidence" value="ECO:0000353"/>
    <property type="project" value="ARUK-UCL"/>
</dbReference>
<dbReference type="GO" id="GO:0030674">
    <property type="term" value="F:protein-macromolecule adaptor activity"/>
    <property type="evidence" value="ECO:0000266"/>
    <property type="project" value="RGD"/>
</dbReference>
<dbReference type="GO" id="GO:0141109">
    <property type="term" value="F:transporter activator activity"/>
    <property type="evidence" value="ECO:0000266"/>
    <property type="project" value="RGD"/>
</dbReference>
<dbReference type="GO" id="GO:0031589">
    <property type="term" value="P:cell-substrate adhesion"/>
    <property type="evidence" value="ECO:0000266"/>
    <property type="project" value="RGD"/>
</dbReference>
<dbReference type="GO" id="GO:0030007">
    <property type="term" value="P:intracellular potassium ion homeostasis"/>
    <property type="evidence" value="ECO:0000266"/>
    <property type="project" value="RGD"/>
</dbReference>
<dbReference type="GO" id="GO:0006883">
    <property type="term" value="P:intracellular sodium ion homeostasis"/>
    <property type="evidence" value="ECO:0000266"/>
    <property type="project" value="RGD"/>
</dbReference>
<dbReference type="GO" id="GO:0021670">
    <property type="term" value="P:lateral ventricle development"/>
    <property type="evidence" value="ECO:0000266"/>
    <property type="project" value="RGD"/>
</dbReference>
<dbReference type="GO" id="GO:0086009">
    <property type="term" value="P:membrane repolarization"/>
    <property type="evidence" value="ECO:0000266"/>
    <property type="project" value="RGD"/>
</dbReference>
<dbReference type="GO" id="GO:0061744">
    <property type="term" value="P:motor behavior"/>
    <property type="evidence" value="ECO:0000266"/>
    <property type="project" value="RGD"/>
</dbReference>
<dbReference type="GO" id="GO:1903976">
    <property type="term" value="P:negative regulation of glial cell migration"/>
    <property type="evidence" value="ECO:0000266"/>
    <property type="project" value="RGD"/>
</dbReference>
<dbReference type="GO" id="GO:0021944">
    <property type="term" value="P:neuronal-glial interaction involved in hindbrain glial-mediated radial cell migration"/>
    <property type="evidence" value="ECO:0000266"/>
    <property type="project" value="RGD"/>
</dbReference>
<dbReference type="GO" id="GO:0045494">
    <property type="term" value="P:photoreceptor cell maintenance"/>
    <property type="evidence" value="ECO:0000266"/>
    <property type="project" value="RGD"/>
</dbReference>
<dbReference type="GO" id="GO:0120036">
    <property type="term" value="P:plasma membrane bounded cell projection organization"/>
    <property type="evidence" value="ECO:0000266"/>
    <property type="project" value="RGD"/>
</dbReference>
<dbReference type="GO" id="GO:0010976">
    <property type="term" value="P:positive regulation of neuron projection development"/>
    <property type="evidence" value="ECO:0000266"/>
    <property type="project" value="RGD"/>
</dbReference>
<dbReference type="GO" id="GO:1903288">
    <property type="term" value="P:positive regulation of potassium ion import across plasma membrane"/>
    <property type="evidence" value="ECO:0000266"/>
    <property type="project" value="RGD"/>
</dbReference>
<dbReference type="GO" id="GO:1903278">
    <property type="term" value="P:positive regulation of sodium ion export across plasma membrane"/>
    <property type="evidence" value="ECO:0000266"/>
    <property type="project" value="RGD"/>
</dbReference>
<dbReference type="GO" id="GO:1990573">
    <property type="term" value="P:potassium ion import across plasma membrane"/>
    <property type="evidence" value="ECO:0000266"/>
    <property type="project" value="RGD"/>
</dbReference>
<dbReference type="GO" id="GO:0050821">
    <property type="term" value="P:protein stabilization"/>
    <property type="evidence" value="ECO:0000266"/>
    <property type="project" value="RGD"/>
</dbReference>
<dbReference type="GO" id="GO:0001895">
    <property type="term" value="P:retina homeostasis"/>
    <property type="evidence" value="ECO:0000266"/>
    <property type="project" value="RGD"/>
</dbReference>
<dbReference type="GO" id="GO:0036376">
    <property type="term" value="P:sodium ion export across plasma membrane"/>
    <property type="evidence" value="ECO:0000266"/>
    <property type="project" value="RGD"/>
</dbReference>
<dbReference type="GO" id="GO:0021678">
    <property type="term" value="P:third ventricle development"/>
    <property type="evidence" value="ECO:0000266"/>
    <property type="project" value="RGD"/>
</dbReference>
<dbReference type="FunFam" id="1.20.5.170:FF:000068">
    <property type="entry name" value="Sodium/potassium-transporting ATPase subunit beta"/>
    <property type="match status" value="1"/>
</dbReference>
<dbReference type="FunFam" id="2.60.40.1660:FF:000003">
    <property type="entry name" value="Sodium/potassium-transporting ATPase subunit beta"/>
    <property type="match status" value="1"/>
</dbReference>
<dbReference type="Gene3D" id="1.20.5.170">
    <property type="match status" value="1"/>
</dbReference>
<dbReference type="Gene3D" id="2.60.40.1660">
    <property type="entry name" value="Na, k-atpase alpha subunit"/>
    <property type="match status" value="1"/>
</dbReference>
<dbReference type="InterPro" id="IPR000402">
    <property type="entry name" value="Na/K_ATPase_sub_beta"/>
</dbReference>
<dbReference type="InterPro" id="IPR038702">
    <property type="entry name" value="Na/K_ATPase_sub_beta_sf"/>
</dbReference>
<dbReference type="NCBIfam" id="TIGR01107">
    <property type="entry name" value="Na_K_ATPase_bet"/>
    <property type="match status" value="1"/>
</dbReference>
<dbReference type="PANTHER" id="PTHR11523">
    <property type="entry name" value="SODIUM/POTASSIUM-DEPENDENT ATPASE BETA SUBUNIT"/>
    <property type="match status" value="1"/>
</dbReference>
<dbReference type="PANTHER" id="PTHR11523:SF26">
    <property type="entry name" value="SODIUM_POTASSIUM-TRANSPORTING ATPASE SUBUNIT BETA-2"/>
    <property type="match status" value="1"/>
</dbReference>
<dbReference type="Pfam" id="PF00287">
    <property type="entry name" value="Na_K-ATPase"/>
    <property type="match status" value="1"/>
</dbReference>
<dbReference type="PROSITE" id="PS00390">
    <property type="entry name" value="ATPASE_NA_K_BETA_1"/>
    <property type="match status" value="1"/>
</dbReference>
<dbReference type="PROSITE" id="PS00391">
    <property type="entry name" value="ATPASE_NA_K_BETA_2"/>
    <property type="match status" value="1"/>
</dbReference>
<proteinExistence type="evidence at protein level"/>
<name>AT1B2_RAT</name>
<reference key="1">
    <citation type="journal article" date="1989" name="J. Biol. Chem.">
        <title>Identification of a putative isoform of the Na,K-ATPase beta subunit. Primary structure and tissue-specific expression.</title>
        <authorList>
            <person name="Martin-Vasallo P."/>
            <person name="Dackowski W."/>
            <person name="Emanuel J.R."/>
            <person name="Levenson R."/>
        </authorList>
    </citation>
    <scope>NUCLEOTIDE SEQUENCE [MRNA]</scope>
</reference>
<reference key="2">
    <citation type="journal article" date="1996" name="Gene">
        <title>Expression and synthesis of the Na,K-ATPase beta 2 subunit in human retinal pigment epithelium.</title>
        <authorList>
            <person name="Ruiz A.C."/>
            <person name="Bhat S.P."/>
            <person name="Bok D."/>
        </authorList>
    </citation>
    <scope>NUCLEOTIDE SEQUENCE [MRNA]</scope>
    <source>
        <tissue>Retinal pigment epithelium</tissue>
    </source>
</reference>
<reference key="3">
    <citation type="journal article" date="1990" name="Gene">
        <title>Regulation of Na+,K(+)-ATPase. II. Cloning and analysis of the 5'-flanking region of the rat NKAB2 gene encoding the beta 2 subunit.</title>
        <authorList>
            <person name="Kawakami K."/>
            <person name="Okamoto H."/>
            <person name="Yagawa Y."/>
            <person name="Nagano K."/>
        </authorList>
    </citation>
    <scope>NUCLEOTIDE SEQUENCE [GENOMIC DNA] OF 1-37</scope>
</reference>
<reference key="4">
    <citation type="journal article" date="2004" name="Am. J. Physiol.">
        <title>Identification of the beta-subunit for nongastric H-K-ATPase in rat anterior prostate.</title>
        <authorList>
            <person name="Pestov N.B."/>
            <person name="Korneenko T.V."/>
            <person name="Radkov R."/>
            <person name="Zhao H."/>
            <person name="Shakhparonov M.I."/>
            <person name="Modyanov N.N."/>
        </authorList>
    </citation>
    <scope>TISSUE SPECIFICITY</scope>
</reference>
<reference key="5">
    <citation type="journal article" date="2013" name="J. Proteome Res.">
        <title>Site-specific glycan-peptide analysis for determination of N-glycoproteome heterogeneity.</title>
        <authorList>
            <person name="Parker B.L."/>
            <person name="Thaysen-Andersen M."/>
            <person name="Solis N."/>
            <person name="Scott N.E."/>
            <person name="Larsen M.R."/>
            <person name="Graham M.E."/>
            <person name="Packer N.H."/>
            <person name="Cordwell S.J."/>
        </authorList>
    </citation>
    <scope>GLYCOSYLATION [LARGE SCALE ANALYSIS] AT ASN-96; ASN-118; ASN-153; ASN-159 AND ASN-238</scope>
    <scope>IDENTIFICATION BY MASS SPECTROMETRY [LARGE SCALE ANALYSIS]</scope>
    <source>
        <tissue>Brain</tissue>
    </source>
</reference>
<gene>
    <name type="primary">Atp1b2</name>
</gene>
<sequence>MVIQKEKKSCGQVVEEWKEFVWNPRTHQFMGRTGTSWAFILLFYLVFYGFLTAMFTLTMWVMLQTVSDHTPKYQDRLATPGLMIRPKTENLDVIVNISDTESWDQHVQKLNKFLEPYNDSIQAQKNDVCRPGRYYEQPDNGVLNYPKRACQFNRTQLGNCSGIGDPTHYGYSTGQPCVFIKMNRVINFYAGANQSMNVTCVGKKDEDAENLGHFIMFPANGNIDLMYFPYYGKKFHVNYTQPLVAVKFLNVTPNVEVNVECRINAANIATDDERDKFAARVAFKLRINKA</sequence>
<keyword id="KW-0130">Cell adhesion</keyword>
<keyword id="KW-1003">Cell membrane</keyword>
<keyword id="KW-1015">Disulfide bond</keyword>
<keyword id="KW-0325">Glycoprotein</keyword>
<keyword id="KW-0406">Ion transport</keyword>
<keyword id="KW-0472">Membrane</keyword>
<keyword id="KW-0630">Potassium</keyword>
<keyword id="KW-0633">Potassium transport</keyword>
<keyword id="KW-1185">Reference proteome</keyword>
<keyword id="KW-0735">Signal-anchor</keyword>
<keyword id="KW-0915">Sodium</keyword>
<keyword id="KW-0739">Sodium transport</keyword>
<keyword id="KW-0740">Sodium/potassium transport</keyword>
<keyword id="KW-0812">Transmembrane</keyword>
<keyword id="KW-1133">Transmembrane helix</keyword>
<keyword id="KW-0813">Transport</keyword>
<evidence type="ECO:0000250" key="1"/>
<evidence type="ECO:0000250" key="2">
    <source>
        <dbReference type="UniProtKB" id="P14231"/>
    </source>
</evidence>
<evidence type="ECO:0000255" key="3"/>
<evidence type="ECO:0000269" key="4">
    <source>
    </source>
</evidence>
<evidence type="ECO:0000305" key="5"/>
<evidence type="ECO:0007744" key="6">
    <source>
    </source>
</evidence>
<protein>
    <recommendedName>
        <fullName>Sodium/potassium-transporting ATPase subunit beta-2</fullName>
    </recommendedName>
    <alternativeName>
        <fullName>Sodium/potassium-dependent ATPase subunit beta-2</fullName>
    </alternativeName>
</protein>
<comment type="function">
    <text>This is the non-catalytic component of the active enzyme, which catalyzes the hydrolysis of ATP coupled with the exchange of Na(+) and K(+) ions across the plasma membrane. The exact function of the beta-2 subunit is not known.</text>
</comment>
<comment type="function">
    <text evidence="1">Mediates cell adhesion of neurons and astrocytes, and promotes neurite outgrowth.</text>
</comment>
<comment type="subunit">
    <text evidence="2 5">The sodium/potassium-transporting ATPase is composed of a catalytic alpha subunit, an auxiliary non-catalytic beta subunit and an additional regulatory subunit. Interacts with isoform 2 of BSG (By similarity).</text>
</comment>
<comment type="subcellular location">
    <subcellularLocation>
        <location>Cell membrane</location>
        <topology>Single-pass type II membrane protein</topology>
    </subcellularLocation>
</comment>
<comment type="tissue specificity">
    <text evidence="4">Highly expressed in brain (at protein level).</text>
</comment>
<comment type="domain">
    <text evidence="1">The C-terminal lobe folds into an immunoglobulin-like domain and mediates cell adhesion properties.</text>
</comment>
<comment type="similarity">
    <text evidence="5">Belongs to the X(+)/potassium ATPases subunit beta family.</text>
</comment>